<comment type="function">
    <text evidence="10 19 20 21">Proteins GvpF to GvpM might be involved in nucleating gas vesicle formation (Probable). May be important for the stability of gas vesicles (Probable). Gas vesicles are hollow, gas filled proteinaceous nanostructures found in several microbial planktonic microorganisms. They allow positioning of halobacteria at the optimal depth for growth in the poorly aerated, shallow brine pools of their habitat (PubMed:33711860).</text>
</comment>
<comment type="function">
    <text evidence="3 4 5 13 14">Expression of a 9.5 kb p-vac DNA fragment containing 2 divergently transcribed regions (gvpD-gvpE-gvpF-gvpG-gvpH-gvpI-gvpJ-gvpK-gvpL-gvpM and gvpA-gvpC-gvpN-gvpO) allows H.volcanii to produce gas vesicles (PubMed:10894744, PubMed:1404376, PubMed:7651141). A similar region restores gas vesicle production in H.halobium without the p-vac locus, but it still has the c-vac locus (PubMed:1398080, PubMed:8002589).</text>
</comment>
<comment type="subunit">
    <text evidence="8 9 11 12 22">GvpF to GvpM interact with each other in vitro, and may form multi-subunit complex(es) (PubMed:24846741, PubMed:33281806, PubMed:34975818). Interacts with GvpC1 (PubMed:35966690). Might interact with GvpA1 (Probable).</text>
</comment>
<comment type="subcellular location">
    <subcellularLocation>
        <location evidence="7">Cytoplasm</location>
    </subcellularLocation>
    <subcellularLocation>
        <location evidence="1">Gas vesicle</location>
    </subcellularLocation>
    <text evidence="7">Not detected in gas vesicles isolated in situ.</text>
</comment>
<comment type="induction">
    <text evidence="6 10 13">Part of a gvpF1-gvpG1-gvpH1-gvpI1-gvpJ1-gvpK1-gvpL1-gvpM1 operon, maximally expressed in early to mid log phase (PubMed:1956294, PubMed:7651141). Gas vesicles appear earlier when grown in static culture, possibly due to O(2)-limitation (PubMed:33711860).</text>
</comment>
<comment type="disruption phenotype">
    <text evidence="3 13 14">A single deletion produces very low levels of gas vesicles, in situ (PubMed:8002589). Deletion of gvpG1-gvpH1-gvpI1 prevents gas vesicle formation, cells still express gvpA1, in H.volcanii (PubMed:7651141). A single deletion produces gas vesicles throughout growth, in H.volcanii (PubMed:10894744).</text>
</comment>
<comment type="miscellaneous">
    <text evidence="5 6 10">Encoded in a 14-gene plasmid locus called p-vac which produces predominantly short, spindle-shaped gas vesicles during all stages of growth.</text>
</comment>
<comment type="similarity">
    <text evidence="18">Belongs to the gas vesicle GvpH family.</text>
</comment>
<geneLocation type="plasmid">
    <name>pNRC100</name>
</geneLocation>
<geneLocation type="plasmid">
    <name>pNRC200</name>
</geneLocation>
<geneLocation type="plasmid">
    <name>pHH1</name>
</geneLocation>
<dbReference type="EMBL" id="M58557">
    <property type="protein sequence ID" value="AAA98191.1"/>
    <property type="molecule type" value="Genomic_DNA"/>
</dbReference>
<dbReference type="EMBL" id="X55648">
    <property type="protein sequence ID" value="CAA39175.1"/>
    <property type="molecule type" value="Genomic_DNA"/>
</dbReference>
<dbReference type="EMBL" id="AF016485">
    <property type="protein sequence ID" value="AAC82804.1"/>
    <property type="molecule type" value="Genomic_DNA"/>
</dbReference>
<dbReference type="EMBL" id="AE004438">
    <property type="protein sequence ID" value="AAG20721.1"/>
    <property type="molecule type" value="Genomic_DNA"/>
</dbReference>
<dbReference type="PIR" id="T08237">
    <property type="entry name" value="T08237"/>
</dbReference>
<dbReference type="RefSeq" id="WP_010890524.1">
    <property type="nucleotide sequence ID" value="NC_001869.1"/>
</dbReference>
<dbReference type="SMR" id="P24372"/>
<dbReference type="GeneID" id="5954623"/>
<dbReference type="KEGG" id="hal:gvpH"/>
<dbReference type="KEGG" id="hal:VNG_6024G"/>
<dbReference type="PATRIC" id="fig|64091.14.peg.2094"/>
<dbReference type="HOGENOM" id="CLU_1478878_0_0_2"/>
<dbReference type="InParanoid" id="P24372"/>
<dbReference type="Proteomes" id="UP000000554">
    <property type="component" value="Plasmid pNRC100"/>
</dbReference>
<dbReference type="Proteomes" id="UP000000554">
    <property type="component" value="Plasmid pNRC200"/>
</dbReference>
<dbReference type="GO" id="GO:0005737">
    <property type="term" value="C:cytoplasm"/>
    <property type="evidence" value="ECO:0007669"/>
    <property type="project" value="UniProtKB-SubCell"/>
</dbReference>
<dbReference type="GO" id="GO:0031411">
    <property type="term" value="C:gas vesicle"/>
    <property type="evidence" value="ECO:0007669"/>
    <property type="project" value="UniProtKB-SubCell"/>
</dbReference>
<dbReference type="InterPro" id="IPR008633">
    <property type="entry name" value="GvpH"/>
</dbReference>
<dbReference type="Pfam" id="PF05455">
    <property type="entry name" value="GvpH"/>
    <property type="match status" value="1"/>
</dbReference>
<accession>P24372</accession>
<accession>Q9HI23</accession>
<organism>
    <name type="scientific">Halobacterium salinarum (strain ATCC 700922 / JCM 11081 / NRC-1)</name>
    <name type="common">Halobacterium halobium</name>
    <dbReference type="NCBI Taxonomy" id="64091"/>
    <lineage>
        <taxon>Archaea</taxon>
        <taxon>Methanobacteriati</taxon>
        <taxon>Methanobacteriota</taxon>
        <taxon>Stenosarchaea group</taxon>
        <taxon>Halobacteria</taxon>
        <taxon>Halobacteriales</taxon>
        <taxon>Halobacteriaceae</taxon>
        <taxon>Halobacterium</taxon>
        <taxon>Halobacterium salinarum NRC-34001</taxon>
    </lineage>
</organism>
<gene>
    <name type="primary">gvpH11</name>
    <name evidence="16" type="synonym">gvpH</name>
    <name evidence="15" type="synonym">p-gvpH</name>
    <name type="ordered locus">VNG_5025G</name>
</gene>
<gene>
    <name evidence="24" type="primary">gvpH1</name>
    <name evidence="24" type="ordered locus">VNG_6024G</name>
</gene>
<proteinExistence type="evidence at protein level"/>
<reference evidence="23" key="1">
    <citation type="journal article" date="1991" name="Gene">
        <title>Structure and organization of the gas vesicle gene cluster on the Halobacterium halobium plasmid pNRC100.</title>
        <authorList>
            <person name="Jones J.G."/>
            <person name="Young D.C."/>
            <person name="Dassarma S."/>
        </authorList>
    </citation>
    <scope>NUCLEOTIDE SEQUENCE [GENOMIC DNA]</scope>
    <source>
        <strain>ATCC 700922 / JCM 11081 / NRC-1</strain>
        <plasmid>pNRC100</plasmid>
    </source>
</reference>
<reference evidence="25" key="2">
    <citation type="journal article" date="1991" name="Mol. Microbiol.">
        <title>A DNA region of 9 kbp contains all genes necessary for gas vesicle synthesis in halophilic archaebacteria.</title>
        <authorList>
            <person name="Horne M."/>
            <person name="Englert C."/>
            <person name="Wimmer C."/>
            <person name="Pfeifer F."/>
        </authorList>
    </citation>
    <scope>NUCLEOTIDE SEQUENCE [GENOMIC DNA]</scope>
    <scope>INDUCTION</scope>
    <source>
        <strain>NRC-817</strain>
        <plasmid>pHH1</plasmid>
    </source>
</reference>
<reference key="3">
    <citation type="journal article" date="1998" name="Genome Res.">
        <title>Snapshot of a large dynamic replicon in a halophilic archaeon: megaplasmid or minichromosome?</title>
        <authorList>
            <person name="Ng W.V."/>
            <person name="Ciufo S.A."/>
            <person name="Smith T.M."/>
            <person name="Bumgarner R.E."/>
            <person name="Baskin D."/>
            <person name="Faust J."/>
            <person name="Hall B."/>
            <person name="Loretz C."/>
            <person name="Seto J."/>
            <person name="Slagel J."/>
            <person name="Hood L."/>
            <person name="DasSarma S."/>
        </authorList>
    </citation>
    <scope>NUCLEOTIDE SEQUENCE [LARGE SCALE GENOMIC DNA]</scope>
    <source>
        <strain>ATCC 700922 / JCM 11081 / NRC-1</strain>
        <plasmid>pNRC100</plasmid>
    </source>
</reference>
<reference evidence="24" key="4">
    <citation type="journal article" date="2000" name="Proc. Natl. Acad. Sci. U.S.A.">
        <title>Genome sequence of Halobacterium species NRC-1.</title>
        <authorList>
            <person name="Ng W.V."/>
            <person name="Kennedy S.P."/>
            <person name="Mahairas G.G."/>
            <person name="Berquist B."/>
            <person name="Pan M."/>
            <person name="Shukla H.D."/>
            <person name="Lasky S.R."/>
            <person name="Baliga N.S."/>
            <person name="Thorsson V."/>
            <person name="Sbrogna J."/>
            <person name="Swartzell S."/>
            <person name="Weir D."/>
            <person name="Hall J."/>
            <person name="Dahl T.A."/>
            <person name="Welti R."/>
            <person name="Goo Y.A."/>
            <person name="Leithauser B."/>
            <person name="Keller K."/>
            <person name="Cruz R."/>
            <person name="Danson M.J."/>
            <person name="Hough D.W."/>
            <person name="Maddocks D.G."/>
            <person name="Jablonski P.E."/>
            <person name="Krebs M.P."/>
            <person name="Angevine C.M."/>
            <person name="Dale H."/>
            <person name="Isenbarger T.A."/>
            <person name="Peck R.F."/>
            <person name="Pohlschroder M."/>
            <person name="Spudich J.L."/>
            <person name="Jung K.-H."/>
            <person name="Alam M."/>
            <person name="Freitas T."/>
            <person name="Hou S."/>
            <person name="Daniels C.J."/>
            <person name="Dennis P.P."/>
            <person name="Omer A.D."/>
            <person name="Ebhardt H."/>
            <person name="Lowe T.M."/>
            <person name="Liang P."/>
            <person name="Riley M."/>
            <person name="Hood L."/>
            <person name="DasSarma S."/>
        </authorList>
    </citation>
    <scope>NUCLEOTIDE SEQUENCE [LARGE SCALE GENOMIC DNA]</scope>
    <source>
        <strain>ATCC 700922 / JCM 11081 / NRC-1</strain>
        <plasmid>pNRC200</plasmid>
    </source>
</reference>
<reference key="5">
    <citation type="journal article" date="1992" name="Gene">
        <title>Genetic transformation of a halophilic archaebacterium with a gas vesicle gene cluster restores its ability to float.</title>
        <authorList>
            <person name="Halladay J.T."/>
            <person name="Ng W.L."/>
            <person name="DasSarma S."/>
        </authorList>
    </citation>
    <scope>FUNCTION</scope>
    <scope>GAS VESICLE PRODUCTION</scope>
    <source>
        <strain>ATCC 700922 / JCM 11081 / NRC-1</strain>
        <plasmid>pNRC100</plasmid>
    </source>
</reference>
<reference key="6">
    <citation type="journal article" date="1992" name="J. Mol. Biol.">
        <title>Three different but related gene clusters encoding gas vesicles in halophilic archaea.</title>
        <authorList>
            <person name="Englert C."/>
            <person name="Krueger K."/>
            <person name="Offner S."/>
            <person name="Pfeifer F."/>
        </authorList>
    </citation>
    <scope>GAS VESICLE GENE CLUSTER</scope>
    <source>
        <strain>NRC-817</strain>
        <plasmid>pHH1</plasmid>
    </source>
</reference>
<reference key="7">
    <citation type="journal article" date="1994" name="J. Bacteriol.">
        <title>Wild-type gas vesicle formation requires at least ten genes in the gvp gene cluster of Halobacterium halobium plasmid pNRC100.</title>
        <authorList>
            <person name="DasSarma S."/>
            <person name="Arora P."/>
            <person name="Lin F."/>
            <person name="Molinari E."/>
            <person name="Yin L.R."/>
        </authorList>
    </citation>
    <scope>DISRUPTION PHENOTYPE</scope>
    <source>
        <strain>ATCC 700922 / JCM 11081 / NRC-1</strain>
        <plasmid>pNRC100</plasmid>
    </source>
</reference>
<reference key="8">
    <citation type="journal article" date="1995" name="Mol. Microbiol.">
        <title>Complementation studies with the gas vesicle-encoding p-vac region of Halobacterium salinarium PHH1 reveal a regulatory role for the p-gvpDE genes.</title>
        <authorList>
            <person name="Offner S."/>
            <person name="Pfeifer F."/>
        </authorList>
    </citation>
    <scope>FUNCTION</scope>
    <scope>INDUCTION</scope>
    <scope>DISRUPTION PHENOTYPE</scope>
    <source>
        <strain>PHH1</strain>
    </source>
</reference>
<reference key="9">
    <citation type="journal article" date="1997" name="Microbiology">
        <title>Growth competition between Halobacterium salinarium strain PHH1 and mutants affected in gas vesicle synthesis.</title>
        <authorList>
            <person name="Beard S.J."/>
            <person name="Hayes P.K."/>
            <person name="Walsby A.E."/>
        </authorList>
    </citation>
    <scope>FUNCTION IN BUOYANCY</scope>
    <scope>POSSIBLE INDUCTION BY OXYGEN LIMITATION</scope>
    <source>
        <strain>PHH1</strain>
    </source>
</reference>
<reference key="10">
    <citation type="journal article" date="2000" name="J. Bacteriol.">
        <title>Eight of fourteen gvp genes are sufficient for formation of gas vesicles in halophilic archaea.</title>
        <authorList>
            <person name="Offner S."/>
            <person name="Hofacker A."/>
            <person name="Wanner G."/>
            <person name="Pfeifer F."/>
        </authorList>
    </citation>
    <scope>FUNCTION</scope>
    <scope>DISRUPTION PHENOTYPE</scope>
    <source>
        <strain>PHH1</strain>
        <plasmid>pHH1</plasmid>
    </source>
</reference>
<reference key="11">
    <citation type="journal article" date="2011" name="J. Proteome Res.">
        <title>New structural proteins of Halobacterium salinarum gas vesicle revealed by comparative proteomics analysis.</title>
        <authorList>
            <person name="Chu L.J."/>
            <person name="Chen M.C."/>
            <person name="Setter J."/>
            <person name="Tsai Y.S."/>
            <person name="Yang H."/>
            <person name="Fang X."/>
            <person name="Ting Y.S."/>
            <person name="Shaffer S.A."/>
            <person name="Taylor G.K."/>
            <person name="von Haller P.D."/>
            <person name="Goodlett D.R."/>
            <person name="Ng W.V."/>
        </authorList>
    </citation>
    <scope>SUBCELLULAR LOCATION</scope>
    <scope>IDENTIFICATION BY MASS SPECTROMETRY</scope>
    <source>
        <strain>ATCC 700922 / JCM 11081 / NRC-1</strain>
    </source>
</reference>
<reference key="12">
    <citation type="journal article" date="2014" name="Extremophiles">
        <title>The accessory gas vesicle protein GvpM of haloarchaea and its interaction partners during gas vesicle formation.</title>
        <authorList>
            <person name="Tavlaridou S."/>
            <person name="Winter K."/>
            <person name="Pfeifer F."/>
        </authorList>
    </citation>
    <scope>FUNCTION</scope>
    <scope>SUBUNIT</scope>
    <source>
        <strain>PHH1</strain>
    </source>
</reference>
<reference key="13">
    <citation type="journal article" date="2020" name="Front. Microbiol.">
        <title>Accessory Gvp Proteins Form a Complex During Gas Vesicle Formation of Haloarchaea.</title>
        <authorList>
            <person name="Voelkner K."/>
            <person name="Jost A."/>
            <person name="Pfeifer F."/>
        </authorList>
    </citation>
    <scope>FUNCTION</scope>
    <scope>SUBUNIT</scope>
    <source>
        <strain>PHH1</strain>
        <plasmid>pHH1</plasmid>
    </source>
</reference>
<reference key="14">
    <citation type="journal article" date="2021" name="Front. Microbiol.">
        <title>Effect of Mutations in GvpJ and GvpM on Gas Vesicle Formation of Halobacterium salinarum.</title>
        <authorList>
            <person name="Jost A."/>
            <person name="Knitsch R."/>
            <person name="Voelkner K."/>
            <person name="Pfeifer F."/>
        </authorList>
    </citation>
    <scope>INTERACTION WITH GVPJ1</scope>
    <source>
        <strain>PHH1</strain>
        <plasmid>pHH1</plasmid>
    </source>
</reference>
<reference key="15">
    <citation type="journal article" date="2022" name="Front. Microbiol.">
        <title>Interaction of the gas vesicle proteins GvpA, GvpC, GvpN, and GvpO of Halobacterium salinarum.</title>
        <authorList>
            <person name="Jost A."/>
            <person name="Pfeifer F."/>
        </authorList>
    </citation>
    <scope>SUBUNIT</scope>
    <source>
        <strain>PHH1</strain>
        <plasmid>pHH1</plasmid>
    </source>
</reference>
<name>GVPH1_HALSA</name>
<protein>
    <recommendedName>
        <fullName evidence="17">Gas vesicle protein H1</fullName>
        <shortName evidence="17">GvpH1</shortName>
    </recommendedName>
</protein>
<evidence type="ECO:0000250" key="1">
    <source>
        <dbReference type="UniProtKB" id="Q9HHT6"/>
    </source>
</evidence>
<evidence type="ECO:0000256" key="2">
    <source>
        <dbReference type="SAM" id="MobiDB-lite"/>
    </source>
</evidence>
<evidence type="ECO:0000269" key="3">
    <source>
    </source>
</evidence>
<evidence type="ECO:0000269" key="4">
    <source>
    </source>
</evidence>
<evidence type="ECO:0000269" key="5">
    <source>
    </source>
</evidence>
<evidence type="ECO:0000269" key="6">
    <source>
    </source>
</evidence>
<evidence type="ECO:0000269" key="7">
    <source>
    </source>
</evidence>
<evidence type="ECO:0000269" key="8">
    <source>
    </source>
</evidence>
<evidence type="ECO:0000269" key="9">
    <source>
    </source>
</evidence>
<evidence type="ECO:0000269" key="10">
    <source>
    </source>
</evidence>
<evidence type="ECO:0000269" key="11">
    <source>
    </source>
</evidence>
<evidence type="ECO:0000269" key="12">
    <source>
    </source>
</evidence>
<evidence type="ECO:0000269" key="13">
    <source>
    </source>
</evidence>
<evidence type="ECO:0000269" key="14">
    <source>
    </source>
</evidence>
<evidence type="ECO:0000303" key="15">
    <source>
    </source>
</evidence>
<evidence type="ECO:0000303" key="16">
    <source>
    </source>
</evidence>
<evidence type="ECO:0000303" key="17">
    <source>
    </source>
</evidence>
<evidence type="ECO:0000305" key="18"/>
<evidence type="ECO:0000305" key="19">
    <source>
    </source>
</evidence>
<evidence type="ECO:0000305" key="20">
    <source>
    </source>
</evidence>
<evidence type="ECO:0000305" key="21">
    <source>
    </source>
</evidence>
<evidence type="ECO:0000305" key="22">
    <source>
    </source>
</evidence>
<evidence type="ECO:0000312" key="23">
    <source>
        <dbReference type="EMBL" id="AAA98191.1"/>
    </source>
</evidence>
<evidence type="ECO:0000312" key="24">
    <source>
        <dbReference type="EMBL" id="AAG20721.1"/>
    </source>
</evidence>
<evidence type="ECO:0000312" key="25">
    <source>
        <dbReference type="EMBL" id="CAA39175.1"/>
    </source>
</evidence>
<sequence>MVPDENDDASDDQSSQLSGLLDQLHTLVEVLADIEEEGGHRHESGRIDRGNARIDYDYDVSIGLGRADGSSYDEEPSSNRSRSEQRSGQQRTTEDSIHVETRGGTSGDELVVVADLPGVTDDDVDVALDTDEQALTLRVDDDVVERVVLDRPDVAITDMTLRNQVLEIRLARTSDTDGGEST</sequence>
<keyword id="KW-0963">Cytoplasm</keyword>
<keyword id="KW-0304">Gas vesicle</keyword>
<keyword id="KW-0614">Plasmid</keyword>
<keyword id="KW-1185">Reference proteome</keyword>
<feature type="chain" id="PRO_0000182687" description="Gas vesicle protein H1">
    <location>
        <begin position="1"/>
        <end position="182"/>
    </location>
</feature>
<feature type="region of interest" description="Disordered" evidence="2">
    <location>
        <begin position="1"/>
        <end position="21"/>
    </location>
</feature>
<feature type="region of interest" description="Disordered" evidence="2">
    <location>
        <begin position="65"/>
        <end position="106"/>
    </location>
</feature>
<feature type="compositionally biased region" description="Acidic residues" evidence="2">
    <location>
        <begin position="1"/>
        <end position="11"/>
    </location>
</feature>
<feature type="compositionally biased region" description="Low complexity" evidence="2">
    <location>
        <begin position="12"/>
        <end position="21"/>
    </location>
</feature>
<feature type="compositionally biased region" description="Basic and acidic residues" evidence="2">
    <location>
        <begin position="92"/>
        <end position="101"/>
    </location>
</feature>